<dbReference type="SMR" id="P0C5H3"/>
<dbReference type="GO" id="GO:0005576">
    <property type="term" value="C:extracellular region"/>
    <property type="evidence" value="ECO:0007669"/>
    <property type="project" value="UniProtKB-SubCell"/>
</dbReference>
<dbReference type="GO" id="GO:0019871">
    <property type="term" value="F:sodium channel inhibitor activity"/>
    <property type="evidence" value="ECO:0007669"/>
    <property type="project" value="InterPro"/>
</dbReference>
<dbReference type="GO" id="GO:0090729">
    <property type="term" value="F:toxin activity"/>
    <property type="evidence" value="ECO:0007669"/>
    <property type="project" value="UniProtKB-KW"/>
</dbReference>
<dbReference type="GO" id="GO:0006952">
    <property type="term" value="P:defense response"/>
    <property type="evidence" value="ECO:0007669"/>
    <property type="project" value="InterPro"/>
</dbReference>
<dbReference type="CDD" id="cd23106">
    <property type="entry name" value="neurotoxins_LC_scorpion"/>
    <property type="match status" value="1"/>
</dbReference>
<dbReference type="Gene3D" id="3.30.30.10">
    <property type="entry name" value="Knottin, scorpion toxin-like"/>
    <property type="match status" value="1"/>
</dbReference>
<dbReference type="InterPro" id="IPR044062">
    <property type="entry name" value="LCN-type_CS_alpha_beta_dom"/>
</dbReference>
<dbReference type="InterPro" id="IPR003614">
    <property type="entry name" value="Scorpion_toxin-like"/>
</dbReference>
<dbReference type="InterPro" id="IPR036574">
    <property type="entry name" value="Scorpion_toxin-like_sf"/>
</dbReference>
<dbReference type="InterPro" id="IPR018218">
    <property type="entry name" value="Scorpion_toxinL"/>
</dbReference>
<dbReference type="InterPro" id="IPR002061">
    <property type="entry name" value="Scorpion_toxinL/defensin"/>
</dbReference>
<dbReference type="Pfam" id="PF00537">
    <property type="entry name" value="Toxin_3"/>
    <property type="match status" value="1"/>
</dbReference>
<dbReference type="PRINTS" id="PR00285">
    <property type="entry name" value="SCORPNTOXIN"/>
</dbReference>
<dbReference type="SMART" id="SM00505">
    <property type="entry name" value="Knot1"/>
    <property type="match status" value="1"/>
</dbReference>
<dbReference type="SUPFAM" id="SSF57095">
    <property type="entry name" value="Scorpion toxin-like"/>
    <property type="match status" value="1"/>
</dbReference>
<dbReference type="PROSITE" id="PS51863">
    <property type="entry name" value="LCN_CSAB"/>
    <property type="match status" value="1"/>
</dbReference>
<comment type="function">
    <text evidence="3">Beta toxins bind voltage-independently at site-4 of sodium channels (Nav) and shift the voltage of activation toward more negative potentials thereby affecting sodium channel activation and promoting spontaneous and repetitive firing. Competes, with apparent high affinity, with anti-insect and anti-mammalian beta-toxins for binding to cockroach and rat brain synaptosomes, respectively. Also competes with an anti-mammalian alpha-toxin on binding to rat brain sodium channels. Has a weak effect on cardiac sodium channels and a marked effect on rat brain and skeletal muscle sodium channels.</text>
</comment>
<comment type="subcellular location">
    <subcellularLocation>
        <location>Secreted</location>
    </subcellularLocation>
</comment>
<comment type="tissue specificity">
    <text>Expressed by the venom gland.</text>
</comment>
<comment type="domain">
    <text evidence="4">Has the structural arrangement of an alpha-helix connected to antiparallel beta-sheets by disulfide bonds (CS-alpha/beta).</text>
</comment>
<comment type="similarity">
    <text evidence="4">Belongs to the long (4 C-C) scorpion toxin superfamily. Sodium channel inhibitor family.</text>
</comment>
<proteinExistence type="evidence at protein level"/>
<feature type="signal peptide" evidence="1">
    <location>
        <begin position="1"/>
        <end position="19"/>
    </location>
</feature>
<feature type="chain" id="PRO_0000306088" description="Beta-mammal/insect toxin Lqhb1">
    <location>
        <begin position="20"/>
        <end position="85"/>
    </location>
</feature>
<feature type="domain" description="LCN-type CS-alpha/beta" evidence="2">
    <location>
        <begin position="20"/>
        <end position="82"/>
    </location>
</feature>
<feature type="disulfide bond" evidence="2">
    <location>
        <begin position="31"/>
        <end position="81"/>
    </location>
</feature>
<feature type="disulfide bond" evidence="2">
    <location>
        <begin position="35"/>
        <end position="56"/>
    </location>
</feature>
<feature type="disulfide bond" evidence="2">
    <location>
        <begin position="42"/>
        <end position="63"/>
    </location>
</feature>
<feature type="disulfide bond" evidence="2">
    <location>
        <begin position="46"/>
        <end position="65"/>
    </location>
</feature>
<organism>
    <name type="scientific">Leiurus hebraeus</name>
    <name type="common">Hebrew deathstalker scorpion</name>
    <name type="synonym">Leiurus quinquestriatus hebraeus</name>
    <dbReference type="NCBI Taxonomy" id="2899558"/>
    <lineage>
        <taxon>Eukaryota</taxon>
        <taxon>Metazoa</taxon>
        <taxon>Ecdysozoa</taxon>
        <taxon>Arthropoda</taxon>
        <taxon>Chelicerata</taxon>
        <taxon>Arachnida</taxon>
        <taxon>Scorpiones</taxon>
        <taxon>Buthida</taxon>
        <taxon>Buthoidea</taxon>
        <taxon>Buthidae</taxon>
        <taxon>Leiurus</taxon>
    </lineage>
</organism>
<sequence length="85" mass="9574">MKIIIFLIVSSLMLIGVKTDNGYLLNKATGCKVWCVINNASCNSECKLRRGNYGYCYFWKLACYCEGAPKSELWAYATNKCNGKL</sequence>
<evidence type="ECO:0000255" key="1"/>
<evidence type="ECO:0000255" key="2">
    <source>
        <dbReference type="PROSITE-ProRule" id="PRU01210"/>
    </source>
</evidence>
<evidence type="ECO:0000269" key="3">
    <source>
    </source>
</evidence>
<evidence type="ECO:0000305" key="4"/>
<reference key="1">
    <citation type="journal article" date="2003" name="Eur. J. Biochem.">
        <title>An 'Old World' scorpion beta-toxin that recognizes both insect and mammalian sodium channels.</title>
        <authorList>
            <person name="Gordon D."/>
            <person name="Ilan N."/>
            <person name="Zilberberg N."/>
            <person name="Gilles N."/>
            <person name="Urbach D."/>
            <person name="Cohen L."/>
            <person name="Karbat I."/>
            <person name="Froy O."/>
            <person name="Gaathon A."/>
            <person name="Kallen R.G."/>
            <person name="Benveniste M."/>
            <person name="Gurevitz M."/>
        </authorList>
    </citation>
    <scope>NUCLEOTIDE SEQUENCE [MRNA]</scope>
    <scope>PROTEIN SEQUENCE OF 28-41</scope>
    <scope>FUNCTION</scope>
    <source>
        <tissue>Venom</tissue>
        <tissue>Venom gland</tissue>
    </source>
</reference>
<protein>
    <recommendedName>
        <fullName>Beta-mammal/insect toxin Lqhb1</fullName>
    </recommendedName>
    <alternativeName>
        <fullName>Lqh-beta-1</fullName>
    </alternativeName>
</protein>
<accession>P0C5H3</accession>
<keyword id="KW-0123">Cardiotoxin</keyword>
<keyword id="KW-0903">Direct protein sequencing</keyword>
<keyword id="KW-1015">Disulfide bond</keyword>
<keyword id="KW-0872">Ion channel impairing toxin</keyword>
<keyword id="KW-0528">Neurotoxin</keyword>
<keyword id="KW-0964">Secreted</keyword>
<keyword id="KW-0732">Signal</keyword>
<keyword id="KW-0800">Toxin</keyword>
<keyword id="KW-0738">Voltage-gated sodium channel impairing toxin</keyword>
<name>SCB1_LEIHE</name>